<sequence length="101" mass="11473">MHCDIYRSSKKDEMYIYIARPNYPDETEQADPFEKVPEAVLQAFGRATFVMHLELAPTRKLARVNVLHVLDSLQTKGFFIQMPPEGLINPNAVEPEGLRGA</sequence>
<name>Y1916_ACIB5</name>
<dbReference type="EMBL" id="CP001182">
    <property type="protein sequence ID" value="ACJ41293.1"/>
    <property type="molecule type" value="Genomic_DNA"/>
</dbReference>
<dbReference type="SMR" id="B7I5W1"/>
<dbReference type="KEGG" id="abn:AB57_1916"/>
<dbReference type="HOGENOM" id="CLU_155118_0_1_6"/>
<dbReference type="Proteomes" id="UP000007094">
    <property type="component" value="Chromosome"/>
</dbReference>
<dbReference type="Gene3D" id="3.10.510.20">
    <property type="entry name" value="YcgL domain"/>
    <property type="match status" value="1"/>
</dbReference>
<dbReference type="HAMAP" id="MF_01866">
    <property type="entry name" value="UPF0745"/>
    <property type="match status" value="1"/>
</dbReference>
<dbReference type="InterPro" id="IPR038068">
    <property type="entry name" value="YcgL-like_sf"/>
</dbReference>
<dbReference type="InterPro" id="IPR027354">
    <property type="entry name" value="YcgL_dom"/>
</dbReference>
<dbReference type="PANTHER" id="PTHR38109">
    <property type="entry name" value="PROTEIN YCGL"/>
    <property type="match status" value="1"/>
</dbReference>
<dbReference type="PANTHER" id="PTHR38109:SF1">
    <property type="entry name" value="PROTEIN YCGL"/>
    <property type="match status" value="1"/>
</dbReference>
<dbReference type="Pfam" id="PF05166">
    <property type="entry name" value="YcgL"/>
    <property type="match status" value="1"/>
</dbReference>
<dbReference type="SUPFAM" id="SSF160191">
    <property type="entry name" value="YcgL-like"/>
    <property type="match status" value="1"/>
</dbReference>
<dbReference type="PROSITE" id="PS51648">
    <property type="entry name" value="YCGL"/>
    <property type="match status" value="1"/>
</dbReference>
<gene>
    <name type="ordered locus">AB57_1916</name>
</gene>
<protein>
    <recommendedName>
        <fullName evidence="1">YcgL domain-containing protein AB57_1916</fullName>
    </recommendedName>
</protein>
<accession>B7I5W1</accession>
<reference key="1">
    <citation type="journal article" date="2008" name="J. Bacteriol.">
        <title>Comparative genome sequence analysis of multidrug-resistant Acinetobacter baumannii.</title>
        <authorList>
            <person name="Adams M.D."/>
            <person name="Goglin K."/>
            <person name="Molyneaux N."/>
            <person name="Hujer K.M."/>
            <person name="Lavender H."/>
            <person name="Jamison J.J."/>
            <person name="MacDonald I.J."/>
            <person name="Martin K.M."/>
            <person name="Russo T."/>
            <person name="Campagnari A.A."/>
            <person name="Hujer A.M."/>
            <person name="Bonomo R.A."/>
            <person name="Gill S.R."/>
        </authorList>
    </citation>
    <scope>NUCLEOTIDE SEQUENCE [LARGE SCALE GENOMIC DNA]</scope>
    <source>
        <strain>AB0057</strain>
    </source>
</reference>
<organism>
    <name type="scientific">Acinetobacter baumannii (strain AB0057)</name>
    <dbReference type="NCBI Taxonomy" id="480119"/>
    <lineage>
        <taxon>Bacteria</taxon>
        <taxon>Pseudomonadati</taxon>
        <taxon>Pseudomonadota</taxon>
        <taxon>Gammaproteobacteria</taxon>
        <taxon>Moraxellales</taxon>
        <taxon>Moraxellaceae</taxon>
        <taxon>Acinetobacter</taxon>
        <taxon>Acinetobacter calcoaceticus/baumannii complex</taxon>
    </lineage>
</organism>
<feature type="chain" id="PRO_0000375265" description="YcgL domain-containing protein AB57_1916">
    <location>
        <begin position="1"/>
        <end position="101"/>
    </location>
</feature>
<feature type="domain" description="YcgL" evidence="1">
    <location>
        <begin position="1"/>
        <end position="92"/>
    </location>
</feature>
<evidence type="ECO:0000255" key="1">
    <source>
        <dbReference type="HAMAP-Rule" id="MF_01866"/>
    </source>
</evidence>
<proteinExistence type="inferred from homology"/>